<gene>
    <name type="primary">WNT8B</name>
</gene>
<reference key="1">
    <citation type="journal article" date="1998" name="Hum. Mol. Genet.">
        <title>A novel mammalian Wnt gene, WNT8B, shows brain-restricted expression in early development, with sharply delimited expression boundaries in the developing forebrain.</title>
        <authorList>
            <person name="Lako M."/>
            <person name="Lindsay S."/>
            <person name="Bullen P."/>
            <person name="Wilson D.I."/>
            <person name="Robson S.C."/>
            <person name="Strachan T."/>
        </authorList>
    </citation>
    <scope>NUCLEOTIDE SEQUENCE [GENOMIC DNA / MRNA]</scope>
    <scope>FUNCTION</scope>
    <scope>TISSUE SPECIFICITY</scope>
</reference>
<reference key="2">
    <citation type="journal article" date="2002" name="Int. J. Oncol.">
        <title>Up-regulation of WNT8B mRNA in human gastric cancer.</title>
        <authorList>
            <person name="Saitoh T."/>
            <person name="Mine T."/>
            <person name="Katoh M."/>
        </authorList>
    </citation>
    <scope>NUCLEOTIDE SEQUENCE [MRNA]</scope>
    <source>
        <tissue>Fetal brain</tissue>
    </source>
</reference>
<reference key="3">
    <citation type="journal article" date="2004" name="Nature">
        <title>The DNA sequence and comparative analysis of human chromosome 10.</title>
        <authorList>
            <person name="Deloukas P."/>
            <person name="Earthrowl M.E."/>
            <person name="Grafham D.V."/>
            <person name="Rubenfield M."/>
            <person name="French L."/>
            <person name="Steward C.A."/>
            <person name="Sims S.K."/>
            <person name="Jones M.C."/>
            <person name="Searle S."/>
            <person name="Scott C."/>
            <person name="Howe K."/>
            <person name="Hunt S.E."/>
            <person name="Andrews T.D."/>
            <person name="Gilbert J.G.R."/>
            <person name="Swarbreck D."/>
            <person name="Ashurst J.L."/>
            <person name="Taylor A."/>
            <person name="Battles J."/>
            <person name="Bird C.P."/>
            <person name="Ainscough R."/>
            <person name="Almeida J.P."/>
            <person name="Ashwell R.I.S."/>
            <person name="Ambrose K.D."/>
            <person name="Babbage A.K."/>
            <person name="Bagguley C.L."/>
            <person name="Bailey J."/>
            <person name="Banerjee R."/>
            <person name="Bates K."/>
            <person name="Beasley H."/>
            <person name="Bray-Allen S."/>
            <person name="Brown A.J."/>
            <person name="Brown J.Y."/>
            <person name="Burford D.C."/>
            <person name="Burrill W."/>
            <person name="Burton J."/>
            <person name="Cahill P."/>
            <person name="Camire D."/>
            <person name="Carter N.P."/>
            <person name="Chapman J.C."/>
            <person name="Clark S.Y."/>
            <person name="Clarke G."/>
            <person name="Clee C.M."/>
            <person name="Clegg S."/>
            <person name="Corby N."/>
            <person name="Coulson A."/>
            <person name="Dhami P."/>
            <person name="Dutta I."/>
            <person name="Dunn M."/>
            <person name="Faulkner L."/>
            <person name="Frankish A."/>
            <person name="Frankland J.A."/>
            <person name="Garner P."/>
            <person name="Garnett J."/>
            <person name="Gribble S."/>
            <person name="Griffiths C."/>
            <person name="Grocock R."/>
            <person name="Gustafson E."/>
            <person name="Hammond S."/>
            <person name="Harley J.L."/>
            <person name="Hart E."/>
            <person name="Heath P.D."/>
            <person name="Ho T.P."/>
            <person name="Hopkins B."/>
            <person name="Horne J."/>
            <person name="Howden P.J."/>
            <person name="Huckle E."/>
            <person name="Hynds C."/>
            <person name="Johnson C."/>
            <person name="Johnson D."/>
            <person name="Kana A."/>
            <person name="Kay M."/>
            <person name="Kimberley A.M."/>
            <person name="Kershaw J.K."/>
            <person name="Kokkinaki M."/>
            <person name="Laird G.K."/>
            <person name="Lawlor S."/>
            <person name="Lee H.M."/>
            <person name="Leongamornlert D.A."/>
            <person name="Laird G."/>
            <person name="Lloyd C."/>
            <person name="Lloyd D.M."/>
            <person name="Loveland J."/>
            <person name="Lovell J."/>
            <person name="McLaren S."/>
            <person name="McLay K.E."/>
            <person name="McMurray A."/>
            <person name="Mashreghi-Mohammadi M."/>
            <person name="Matthews L."/>
            <person name="Milne S."/>
            <person name="Nickerson T."/>
            <person name="Nguyen M."/>
            <person name="Overton-Larty E."/>
            <person name="Palmer S.A."/>
            <person name="Pearce A.V."/>
            <person name="Peck A.I."/>
            <person name="Pelan S."/>
            <person name="Phillimore B."/>
            <person name="Porter K."/>
            <person name="Rice C.M."/>
            <person name="Rogosin A."/>
            <person name="Ross M.T."/>
            <person name="Sarafidou T."/>
            <person name="Sehra H.K."/>
            <person name="Shownkeen R."/>
            <person name="Skuce C.D."/>
            <person name="Smith M."/>
            <person name="Standring L."/>
            <person name="Sycamore N."/>
            <person name="Tester J."/>
            <person name="Thorpe A."/>
            <person name="Torcasso W."/>
            <person name="Tracey A."/>
            <person name="Tromans A."/>
            <person name="Tsolas J."/>
            <person name="Wall M."/>
            <person name="Walsh J."/>
            <person name="Wang H."/>
            <person name="Weinstock K."/>
            <person name="West A.P."/>
            <person name="Willey D.L."/>
            <person name="Whitehead S.L."/>
            <person name="Wilming L."/>
            <person name="Wray P.W."/>
            <person name="Young L."/>
            <person name="Chen Y."/>
            <person name="Lovering R.C."/>
            <person name="Moschonas N.K."/>
            <person name="Siebert R."/>
            <person name="Fechtel K."/>
            <person name="Bentley D."/>
            <person name="Durbin R.M."/>
            <person name="Hubbard T."/>
            <person name="Doucette-Stamm L."/>
            <person name="Beck S."/>
            <person name="Smith D.R."/>
            <person name="Rogers J."/>
        </authorList>
    </citation>
    <scope>NUCLEOTIDE SEQUENCE [LARGE SCALE GENOMIC DNA]</scope>
</reference>
<reference key="4">
    <citation type="journal article" date="1996" name="Genomics">
        <title>Isolation and characterization of WNT8B, a novel human Wnt gene that maps to 10q24.</title>
        <authorList>
            <person name="Lako M."/>
            <person name="Strachan T."/>
            <person name="Curtis A.R.J."/>
            <person name="Lindsay S."/>
        </authorList>
    </citation>
    <scope>NUCLEOTIDE SEQUENCE [MRNA] OF 23-317</scope>
</reference>
<reference key="5">
    <citation type="journal article" date="2006" name="Science">
        <title>The consensus coding sequences of human breast and colorectal cancers.</title>
        <authorList>
            <person name="Sjoeblom T."/>
            <person name="Jones S."/>
            <person name="Wood L.D."/>
            <person name="Parsons D.W."/>
            <person name="Lin J."/>
            <person name="Barber T.D."/>
            <person name="Mandelker D."/>
            <person name="Leary R.J."/>
            <person name="Ptak J."/>
            <person name="Silliman N."/>
            <person name="Szabo S."/>
            <person name="Buckhaults P."/>
            <person name="Farrell C."/>
            <person name="Meeh P."/>
            <person name="Markowitz S.D."/>
            <person name="Willis J."/>
            <person name="Dawson D."/>
            <person name="Willson J.K.V."/>
            <person name="Gazdar A.F."/>
            <person name="Hartigan J."/>
            <person name="Wu L."/>
            <person name="Liu C."/>
            <person name="Parmigiani G."/>
            <person name="Park B.H."/>
            <person name="Bachman K.E."/>
            <person name="Papadopoulos N."/>
            <person name="Vogelstein B."/>
            <person name="Kinzler K.W."/>
            <person name="Velculescu V.E."/>
        </authorList>
    </citation>
    <scope>VARIANT [LARGE SCALE ANALYSIS] GLN-53</scope>
</reference>
<keyword id="KW-0217">Developmental protein</keyword>
<keyword id="KW-1015">Disulfide bond</keyword>
<keyword id="KW-0272">Extracellular matrix</keyword>
<keyword id="KW-0325">Glycoprotein</keyword>
<keyword id="KW-0449">Lipoprotein</keyword>
<keyword id="KW-1185">Reference proteome</keyword>
<keyword id="KW-0964">Secreted</keyword>
<keyword id="KW-0732">Signal</keyword>
<keyword id="KW-0879">Wnt signaling pathway</keyword>
<accession>Q93098</accession>
<accession>O00771</accession>
<accession>Q5VX55</accession>
<accession>Q8WYK9</accession>
<comment type="function">
    <text evidence="5">Ligand for members of the frizzled family of seven transmembrane receptors. May play an important role in the development and differentiation of certain forebrain structures, notably the hippocampus.</text>
</comment>
<comment type="subcellular location">
    <subcellularLocation>
        <location>Secreted</location>
        <location>Extracellular space</location>
        <location>Extracellular matrix</location>
    </subcellularLocation>
</comment>
<comment type="tissue specificity">
    <text evidence="5">Expression is restricted to the brain, and more specifically to the forebrain.</text>
</comment>
<comment type="PTM">
    <text evidence="1 2">Palmitoleoylation is required for efficient binding to frizzled receptors (By similarity). Depalmitoleoylation leads to Wnt signaling pathway inhibition (By similarity).</text>
</comment>
<comment type="PTM">
    <text evidence="1">Proteolytic processing by TIKI1 and TIKI2 promotes oxidation and formation of large disulfide-bond oligomers, leading to inactivation of WNT8B.</text>
</comment>
<comment type="similarity">
    <text evidence="6">Belongs to the Wnt family.</text>
</comment>
<protein>
    <recommendedName>
        <fullName>Protein Wnt-8b</fullName>
    </recommendedName>
</protein>
<organism>
    <name type="scientific">Homo sapiens</name>
    <name type="common">Human</name>
    <dbReference type="NCBI Taxonomy" id="9606"/>
    <lineage>
        <taxon>Eukaryota</taxon>
        <taxon>Metazoa</taxon>
        <taxon>Chordata</taxon>
        <taxon>Craniata</taxon>
        <taxon>Vertebrata</taxon>
        <taxon>Euteleostomi</taxon>
        <taxon>Mammalia</taxon>
        <taxon>Eutheria</taxon>
        <taxon>Euarchontoglires</taxon>
        <taxon>Primates</taxon>
        <taxon>Haplorrhini</taxon>
        <taxon>Catarrhini</taxon>
        <taxon>Hominidae</taxon>
        <taxon>Homo</taxon>
    </lineage>
</organism>
<feature type="signal peptide" evidence="3">
    <location>
        <begin position="1"/>
        <end position="22"/>
    </location>
</feature>
<feature type="chain" id="PRO_0000041450" description="Protein Wnt-8b">
    <location>
        <begin position="23"/>
        <end position="351"/>
    </location>
</feature>
<feature type="lipid moiety-binding region" description="O-palmitoleoyl serine" evidence="1">
    <location>
        <position position="186"/>
    </location>
</feature>
<feature type="glycosylation site" description="N-linked (GlcNAc...) asparagine" evidence="3">
    <location>
        <position position="103"/>
    </location>
</feature>
<feature type="glycosylation site" description="N-linked (GlcNAc...) asparagine" evidence="3">
    <location>
        <position position="259"/>
    </location>
</feature>
<feature type="disulfide bond" evidence="1">
    <location>
        <begin position="54"/>
        <end position="65"/>
    </location>
</feature>
<feature type="disulfide bond" evidence="1">
    <location>
        <begin position="104"/>
        <end position="112"/>
    </location>
</feature>
<feature type="disulfide bond" evidence="1">
    <location>
        <begin position="114"/>
        <end position="132"/>
    </location>
</feature>
<feature type="disulfide bond" evidence="1">
    <location>
        <begin position="180"/>
        <end position="194"/>
    </location>
</feature>
<feature type="disulfide bond" evidence="1">
    <location>
        <begin position="182"/>
        <end position="189"/>
    </location>
</feature>
<feature type="disulfide bond" evidence="1">
    <location>
        <begin position="256"/>
        <end position="294"/>
    </location>
</feature>
<feature type="disulfide bond" evidence="1">
    <location>
        <begin position="272"/>
        <end position="287"/>
    </location>
</feature>
<feature type="disulfide bond" evidence="1">
    <location>
        <begin position="291"/>
        <end position="333"/>
    </location>
</feature>
<feature type="disulfide bond" evidence="1">
    <location>
        <begin position="309"/>
        <end position="324"/>
    </location>
</feature>
<feature type="disulfide bond" evidence="1">
    <location>
        <begin position="311"/>
        <end position="321"/>
    </location>
</feature>
<feature type="disulfide bond" evidence="1">
    <location>
        <begin position="316"/>
        <end position="317"/>
    </location>
</feature>
<feature type="sequence variant" id="VAR_020310" description="In dbSNP:rs3793771.">
    <original>C</original>
    <variation>S</variation>
    <location>
        <position position="11"/>
    </location>
</feature>
<feature type="sequence variant" id="VAR_036288" description="In a colorectal cancer sample; somatic mutation." evidence="4">
    <original>E</original>
    <variation>Q</variation>
    <location>
        <position position="53"/>
    </location>
</feature>
<feature type="sequence conflict" description="In Ref. 1 and 4." evidence="6" ref="1 4">
    <original>G</original>
    <variation>A</variation>
    <location>
        <position position="230"/>
    </location>
</feature>
<feature type="sequence conflict" description="In Ref. 1 and 4." evidence="6" ref="1 4">
    <original>R</original>
    <variation>L</variation>
    <location>
        <position position="284"/>
    </location>
</feature>
<evidence type="ECO:0000250" key="1">
    <source>
        <dbReference type="UniProtKB" id="P28026"/>
    </source>
</evidence>
<evidence type="ECO:0000250" key="2">
    <source>
        <dbReference type="UniProtKB" id="P56704"/>
    </source>
</evidence>
<evidence type="ECO:0000255" key="3"/>
<evidence type="ECO:0000269" key="4">
    <source>
    </source>
</evidence>
<evidence type="ECO:0000269" key="5">
    <source>
    </source>
</evidence>
<evidence type="ECO:0000305" key="6"/>
<sequence>MFLSKPSVYICLFTCVLQLSHSWSVNNFLMTGPKAYLIYSSSVAAGAQSGIEECKYQFAWDRWNCPERALQLSSHGGLRSANRETAFVHAISSAGVMYTLTRNCSLGDFDNCGCDDSRNGQLGGQGWLWGGCSDNVGFGEAISKQFVDALETGQDARAAMNLHNNEAGRKAVKGTMKRTCKCHGVSGSCTTQTCWLQLPEFREVGAHLKEKYHAALKVDLLQGAGNSAAGRGAIADTFRSISTRELVHLEDSPDYCLENKTLGLLGTEGRECLRRGRALGRWERRSCRRLCGDCGLAVEERRAETVSSCNCKFHWCCAVRCEQCRRRVTKYFCSRAERPRGGAAHKPGRKP</sequence>
<proteinExistence type="evidence at transcript level"/>
<dbReference type="EMBL" id="Y11094">
    <property type="protein sequence ID" value="CAA71968.1"/>
    <property type="molecule type" value="mRNA"/>
</dbReference>
<dbReference type="EMBL" id="Y11108">
    <property type="protein sequence ID" value="CAA71994.1"/>
    <property type="molecule type" value="Genomic_DNA"/>
</dbReference>
<dbReference type="EMBL" id="AB073637">
    <property type="protein sequence ID" value="BAB83924.1"/>
    <property type="molecule type" value="mRNA"/>
</dbReference>
<dbReference type="EMBL" id="AL359759">
    <property type="status" value="NOT_ANNOTATED_CDS"/>
    <property type="molecule type" value="Genomic_DNA"/>
</dbReference>
<dbReference type="EMBL" id="AL133352">
    <property type="status" value="NOT_ANNOTATED_CDS"/>
    <property type="molecule type" value="Genomic_DNA"/>
</dbReference>
<dbReference type="EMBL" id="X91940">
    <property type="protein sequence ID" value="CAA63017.1"/>
    <property type="molecule type" value="mRNA"/>
</dbReference>
<dbReference type="CCDS" id="CCDS7494.1"/>
<dbReference type="RefSeq" id="NP_003384.2">
    <property type="nucleotide sequence ID" value="NM_003393.4"/>
</dbReference>
<dbReference type="SMR" id="Q93098"/>
<dbReference type="BioGRID" id="113316">
    <property type="interactions" value="6"/>
</dbReference>
<dbReference type="FunCoup" id="Q93098">
    <property type="interactions" value="506"/>
</dbReference>
<dbReference type="IntAct" id="Q93098">
    <property type="interactions" value="6"/>
</dbReference>
<dbReference type="STRING" id="9606.ENSP00000340677"/>
<dbReference type="GlyCosmos" id="Q93098">
    <property type="glycosylation" value="2 sites, No reported glycans"/>
</dbReference>
<dbReference type="GlyGen" id="Q93098">
    <property type="glycosylation" value="2 sites"/>
</dbReference>
<dbReference type="iPTMnet" id="Q93098"/>
<dbReference type="PhosphoSitePlus" id="Q93098"/>
<dbReference type="BioMuta" id="WNT8B"/>
<dbReference type="DMDM" id="66774217"/>
<dbReference type="MassIVE" id="Q93098"/>
<dbReference type="PaxDb" id="9606-ENSP00000340677"/>
<dbReference type="PeptideAtlas" id="Q93098"/>
<dbReference type="ProteomicsDB" id="75724"/>
<dbReference type="Antibodypedia" id="17653">
    <property type="antibodies" value="222 antibodies from 31 providers"/>
</dbReference>
<dbReference type="DNASU" id="7479"/>
<dbReference type="Ensembl" id="ENST00000343737.6">
    <property type="protein sequence ID" value="ENSP00000340677.5"/>
    <property type="gene ID" value="ENSG00000075290.8"/>
</dbReference>
<dbReference type="GeneID" id="7479"/>
<dbReference type="KEGG" id="hsa:7479"/>
<dbReference type="MANE-Select" id="ENST00000343737.6">
    <property type="protein sequence ID" value="ENSP00000340677.5"/>
    <property type="RefSeq nucleotide sequence ID" value="NM_003393.4"/>
    <property type="RefSeq protein sequence ID" value="NP_003384.2"/>
</dbReference>
<dbReference type="UCSC" id="uc001krb.4">
    <property type="organism name" value="human"/>
</dbReference>
<dbReference type="AGR" id="HGNC:12789"/>
<dbReference type="CTD" id="7479"/>
<dbReference type="DisGeNET" id="7479"/>
<dbReference type="GeneCards" id="WNT8B"/>
<dbReference type="HGNC" id="HGNC:12789">
    <property type="gene designation" value="WNT8B"/>
</dbReference>
<dbReference type="HPA" id="ENSG00000075290">
    <property type="expression patterns" value="Tissue enhanced (parathyroid)"/>
</dbReference>
<dbReference type="MIM" id="601396">
    <property type="type" value="gene"/>
</dbReference>
<dbReference type="neXtProt" id="NX_Q93098"/>
<dbReference type="OpenTargets" id="ENSG00000075290"/>
<dbReference type="PharmGKB" id="PA37390"/>
<dbReference type="VEuPathDB" id="HostDB:ENSG00000075290"/>
<dbReference type="eggNOG" id="KOG3913">
    <property type="taxonomic scope" value="Eukaryota"/>
</dbReference>
<dbReference type="GeneTree" id="ENSGT00940000160584"/>
<dbReference type="HOGENOM" id="CLU_033039_1_2_1"/>
<dbReference type="InParanoid" id="Q93098"/>
<dbReference type="OMA" id="FMHLEVF"/>
<dbReference type="OrthoDB" id="5945655at2759"/>
<dbReference type="PAN-GO" id="Q93098">
    <property type="GO annotations" value="6 GO annotations based on evolutionary models"/>
</dbReference>
<dbReference type="PhylomeDB" id="Q93098"/>
<dbReference type="TreeFam" id="TF105310"/>
<dbReference type="PathwayCommons" id="Q93098"/>
<dbReference type="Reactome" id="R-HSA-201681">
    <property type="pathway name" value="TCF dependent signaling in response to WNT"/>
</dbReference>
<dbReference type="Reactome" id="R-HSA-3238698">
    <property type="pathway name" value="WNT ligand biogenesis and trafficking"/>
</dbReference>
<dbReference type="Reactome" id="R-HSA-373080">
    <property type="pathway name" value="Class B/2 (Secretin family receptors)"/>
</dbReference>
<dbReference type="Reactome" id="R-HSA-4641262">
    <property type="pathway name" value="Disassembly of the destruction complex and recruitment of AXIN to the membrane"/>
</dbReference>
<dbReference type="SignaLink" id="Q93098"/>
<dbReference type="SIGNOR" id="Q93098"/>
<dbReference type="BioGRID-ORCS" id="7479">
    <property type="hits" value="9 hits in 1148 CRISPR screens"/>
</dbReference>
<dbReference type="GeneWiki" id="WNT8B"/>
<dbReference type="GenomeRNAi" id="7479"/>
<dbReference type="Pharos" id="Q93098">
    <property type="development level" value="Tbio"/>
</dbReference>
<dbReference type="PRO" id="PR:Q93098"/>
<dbReference type="Proteomes" id="UP000005640">
    <property type="component" value="Chromosome 10"/>
</dbReference>
<dbReference type="RNAct" id="Q93098">
    <property type="molecule type" value="protein"/>
</dbReference>
<dbReference type="Bgee" id="ENSG00000075290">
    <property type="expression patterns" value="Expressed in adult mammalian kidney and 25 other cell types or tissues"/>
</dbReference>
<dbReference type="ExpressionAtlas" id="Q93098">
    <property type="expression patterns" value="baseline and differential"/>
</dbReference>
<dbReference type="GO" id="GO:0005576">
    <property type="term" value="C:extracellular region"/>
    <property type="evidence" value="ECO:0000304"/>
    <property type="project" value="Reactome"/>
</dbReference>
<dbReference type="GO" id="GO:0005615">
    <property type="term" value="C:extracellular space"/>
    <property type="evidence" value="ECO:0000318"/>
    <property type="project" value="GO_Central"/>
</dbReference>
<dbReference type="GO" id="GO:0005125">
    <property type="term" value="F:cytokine activity"/>
    <property type="evidence" value="ECO:0000318"/>
    <property type="project" value="GO_Central"/>
</dbReference>
<dbReference type="GO" id="GO:0005109">
    <property type="term" value="F:frizzled binding"/>
    <property type="evidence" value="ECO:0000318"/>
    <property type="project" value="GO_Central"/>
</dbReference>
<dbReference type="GO" id="GO:0048018">
    <property type="term" value="F:receptor ligand activity"/>
    <property type="evidence" value="ECO:0000314"/>
    <property type="project" value="WormBase"/>
</dbReference>
<dbReference type="GO" id="GO:0060070">
    <property type="term" value="P:canonical Wnt signaling pathway"/>
    <property type="evidence" value="ECO:0000314"/>
    <property type="project" value="WormBase"/>
</dbReference>
<dbReference type="GO" id="GO:0045165">
    <property type="term" value="P:cell fate commitment"/>
    <property type="evidence" value="ECO:0000318"/>
    <property type="project" value="GO_Central"/>
</dbReference>
<dbReference type="GO" id="GO:0071300">
    <property type="term" value="P:cellular response to retinoic acid"/>
    <property type="evidence" value="ECO:0000250"/>
    <property type="project" value="UniProtKB"/>
</dbReference>
<dbReference type="GO" id="GO:0048263">
    <property type="term" value="P:determination of dorsal identity"/>
    <property type="evidence" value="ECO:0000250"/>
    <property type="project" value="BHF-UCL"/>
</dbReference>
<dbReference type="GO" id="GO:0007369">
    <property type="term" value="P:gastrulation"/>
    <property type="evidence" value="ECO:0000250"/>
    <property type="project" value="BHF-UCL"/>
</dbReference>
<dbReference type="GO" id="GO:0007399">
    <property type="term" value="P:nervous system development"/>
    <property type="evidence" value="ECO:0000304"/>
    <property type="project" value="ProtInc"/>
</dbReference>
<dbReference type="GO" id="GO:0030182">
    <property type="term" value="P:neuron differentiation"/>
    <property type="evidence" value="ECO:0000250"/>
    <property type="project" value="UniProtKB"/>
</dbReference>
<dbReference type="GO" id="GO:0032355">
    <property type="term" value="P:response to estradiol"/>
    <property type="evidence" value="ECO:0000303"/>
    <property type="project" value="BHF-UCL"/>
</dbReference>
<dbReference type="GO" id="GO:0032526">
    <property type="term" value="P:response to retinoic acid"/>
    <property type="evidence" value="ECO:0000303"/>
    <property type="project" value="BHF-UCL"/>
</dbReference>
<dbReference type="GO" id="GO:0007165">
    <property type="term" value="P:signal transduction"/>
    <property type="evidence" value="ECO:0000304"/>
    <property type="project" value="ProtInc"/>
</dbReference>
<dbReference type="CDD" id="cd19352">
    <property type="entry name" value="Wnt_Wnt8b"/>
    <property type="match status" value="1"/>
</dbReference>
<dbReference type="FunFam" id="3.30.2460.20:FF:000003">
    <property type="entry name" value="Protein Wnt"/>
    <property type="match status" value="1"/>
</dbReference>
<dbReference type="Gene3D" id="3.30.2460.20">
    <property type="match status" value="1"/>
</dbReference>
<dbReference type="InterPro" id="IPR005817">
    <property type="entry name" value="Wnt"/>
</dbReference>
<dbReference type="InterPro" id="IPR013301">
    <property type="entry name" value="Wnt8"/>
</dbReference>
<dbReference type="InterPro" id="IPR043158">
    <property type="entry name" value="Wnt_C"/>
</dbReference>
<dbReference type="InterPro" id="IPR018161">
    <property type="entry name" value="Wnt_CS"/>
</dbReference>
<dbReference type="PANTHER" id="PTHR12027:SF94">
    <property type="entry name" value="PROTEIN WNT-8B"/>
    <property type="match status" value="1"/>
</dbReference>
<dbReference type="PANTHER" id="PTHR12027">
    <property type="entry name" value="WNT RELATED"/>
    <property type="match status" value="1"/>
</dbReference>
<dbReference type="Pfam" id="PF00110">
    <property type="entry name" value="wnt"/>
    <property type="match status" value="1"/>
</dbReference>
<dbReference type="PRINTS" id="PR01892">
    <property type="entry name" value="WNT8PROTEIN"/>
</dbReference>
<dbReference type="PRINTS" id="PR01349">
    <property type="entry name" value="WNTPROTEIN"/>
</dbReference>
<dbReference type="SMART" id="SM00097">
    <property type="entry name" value="WNT1"/>
    <property type="match status" value="1"/>
</dbReference>
<dbReference type="PROSITE" id="PS00246">
    <property type="entry name" value="WNT1"/>
    <property type="match status" value="1"/>
</dbReference>
<name>WNT8B_HUMAN</name>